<organism>
    <name type="scientific">Shewanella denitrificans (strain OS217 / ATCC BAA-1090 / DSM 15013)</name>
    <dbReference type="NCBI Taxonomy" id="318161"/>
    <lineage>
        <taxon>Bacteria</taxon>
        <taxon>Pseudomonadati</taxon>
        <taxon>Pseudomonadota</taxon>
        <taxon>Gammaproteobacteria</taxon>
        <taxon>Alteromonadales</taxon>
        <taxon>Shewanellaceae</taxon>
        <taxon>Shewanella</taxon>
    </lineage>
</organism>
<gene>
    <name evidence="1" type="primary">pckA</name>
    <name type="ordered locus">Sden_0117</name>
</gene>
<proteinExistence type="inferred from homology"/>
<name>PCKA_SHEDO</name>
<keyword id="KW-0067">ATP-binding</keyword>
<keyword id="KW-0963">Cytoplasm</keyword>
<keyword id="KW-0210">Decarboxylase</keyword>
<keyword id="KW-0312">Gluconeogenesis</keyword>
<keyword id="KW-0456">Lyase</keyword>
<keyword id="KW-0464">Manganese</keyword>
<keyword id="KW-0479">Metal-binding</keyword>
<keyword id="KW-0547">Nucleotide-binding</keyword>
<keyword id="KW-1185">Reference proteome</keyword>
<protein>
    <recommendedName>
        <fullName evidence="1">Phosphoenolpyruvate carboxykinase (ATP)</fullName>
        <shortName evidence="1">PCK</shortName>
        <shortName evidence="1">PEP carboxykinase</shortName>
        <shortName evidence="1">PEPCK</shortName>
        <ecNumber evidence="1">4.1.1.49</ecNumber>
    </recommendedName>
</protein>
<evidence type="ECO:0000255" key="1">
    <source>
        <dbReference type="HAMAP-Rule" id="MF_00453"/>
    </source>
</evidence>
<sequence length="513" mass="55906">MTDGAPRTFLNPTSAELVEIALQRGEGRLTANGALVALTGARTGRSPADRFIVKEPSSEADIEWGPVNKPFDAGAFDALWGRVEAYLSEKELFVSELEVGADDEHYLPVRVTTEYAWHQLFARNLFITPEHFNRGDKGVWQIINAPGFVCDPSRDGTHSDAVVILNFAERKVLLAGLKYAGEMKKSMFSVQNFLLPAKGVLPMHCSANVGQDGDTTLFFGLSGTGKTTLSADPKRFLIGDDEHGWAKGGVFNIEGGCYAKCIDLSQKNEPVIWDAIRFGTVLENVMLDENRVPNYKDSSLTENSRAAYPLEHIAQRKVENRGNEPHAVVFLTCDVSGVLPPVSILTKEQAAYHFLSGYTAKVGSTEMGSTSAIQSTFSTCFGAPFFPRPAGVYAELLIERIESFNSQVYLVNTGWTGGPHGVGKRFDIPTTRAIVDAIVSGSLKDAPTEHLATLNLAVPLAIEGVDSTLLNPINTWADKDMYAKYAKQLAQEFNSNFAKYQVSEAIKQAGPKA</sequence>
<dbReference type="EC" id="4.1.1.49" evidence="1"/>
<dbReference type="EMBL" id="CP000302">
    <property type="protein sequence ID" value="ABE53414.1"/>
    <property type="molecule type" value="Genomic_DNA"/>
</dbReference>
<dbReference type="RefSeq" id="WP_011494583.1">
    <property type="nucleotide sequence ID" value="NC_007954.1"/>
</dbReference>
<dbReference type="SMR" id="Q12T12"/>
<dbReference type="STRING" id="318161.Sden_0117"/>
<dbReference type="KEGG" id="sdn:Sden_0117"/>
<dbReference type="eggNOG" id="COG1866">
    <property type="taxonomic scope" value="Bacteria"/>
</dbReference>
<dbReference type="HOGENOM" id="CLU_018247_0_1_6"/>
<dbReference type="OrthoDB" id="9806325at2"/>
<dbReference type="UniPathway" id="UPA00138"/>
<dbReference type="Proteomes" id="UP000001982">
    <property type="component" value="Chromosome"/>
</dbReference>
<dbReference type="GO" id="GO:0005829">
    <property type="term" value="C:cytosol"/>
    <property type="evidence" value="ECO:0007669"/>
    <property type="project" value="TreeGrafter"/>
</dbReference>
<dbReference type="GO" id="GO:0005524">
    <property type="term" value="F:ATP binding"/>
    <property type="evidence" value="ECO:0007669"/>
    <property type="project" value="UniProtKB-UniRule"/>
</dbReference>
<dbReference type="GO" id="GO:0046872">
    <property type="term" value="F:metal ion binding"/>
    <property type="evidence" value="ECO:0007669"/>
    <property type="project" value="UniProtKB-KW"/>
</dbReference>
<dbReference type="GO" id="GO:0004612">
    <property type="term" value="F:phosphoenolpyruvate carboxykinase (ATP) activity"/>
    <property type="evidence" value="ECO:0007669"/>
    <property type="project" value="UniProtKB-UniRule"/>
</dbReference>
<dbReference type="GO" id="GO:0006094">
    <property type="term" value="P:gluconeogenesis"/>
    <property type="evidence" value="ECO:0007669"/>
    <property type="project" value="UniProtKB-UniRule"/>
</dbReference>
<dbReference type="CDD" id="cd00484">
    <property type="entry name" value="PEPCK_ATP"/>
    <property type="match status" value="1"/>
</dbReference>
<dbReference type="FunFam" id="2.170.8.10:FF:000001">
    <property type="entry name" value="Phosphoenolpyruvate carboxykinase (ATP)"/>
    <property type="match status" value="1"/>
</dbReference>
<dbReference type="Gene3D" id="3.90.228.20">
    <property type="match status" value="1"/>
</dbReference>
<dbReference type="Gene3D" id="3.40.449.10">
    <property type="entry name" value="Phosphoenolpyruvate Carboxykinase, domain 1"/>
    <property type="match status" value="1"/>
</dbReference>
<dbReference type="Gene3D" id="2.170.8.10">
    <property type="entry name" value="Phosphoenolpyruvate Carboxykinase, domain 2"/>
    <property type="match status" value="1"/>
</dbReference>
<dbReference type="HAMAP" id="MF_00453">
    <property type="entry name" value="PEPCK_ATP"/>
    <property type="match status" value="1"/>
</dbReference>
<dbReference type="InterPro" id="IPR001272">
    <property type="entry name" value="PEP_carboxykinase_ATP"/>
</dbReference>
<dbReference type="InterPro" id="IPR013035">
    <property type="entry name" value="PEP_carboxykinase_C"/>
</dbReference>
<dbReference type="InterPro" id="IPR008210">
    <property type="entry name" value="PEP_carboxykinase_N"/>
</dbReference>
<dbReference type="InterPro" id="IPR015994">
    <property type="entry name" value="PEPCK_ATP_CS"/>
</dbReference>
<dbReference type="NCBIfam" id="TIGR00224">
    <property type="entry name" value="pckA"/>
    <property type="match status" value="1"/>
</dbReference>
<dbReference type="NCBIfam" id="NF006820">
    <property type="entry name" value="PRK09344.1-2"/>
    <property type="match status" value="1"/>
</dbReference>
<dbReference type="NCBIfam" id="NF006821">
    <property type="entry name" value="PRK09344.1-3"/>
    <property type="match status" value="1"/>
</dbReference>
<dbReference type="NCBIfam" id="NF006823">
    <property type="entry name" value="PRK09344.1-5"/>
    <property type="match status" value="1"/>
</dbReference>
<dbReference type="PANTHER" id="PTHR30031:SF0">
    <property type="entry name" value="PHOSPHOENOLPYRUVATE CARBOXYKINASE (ATP)"/>
    <property type="match status" value="1"/>
</dbReference>
<dbReference type="PANTHER" id="PTHR30031">
    <property type="entry name" value="PHOSPHOENOLPYRUVATE CARBOXYKINASE ATP"/>
    <property type="match status" value="1"/>
</dbReference>
<dbReference type="Pfam" id="PF01293">
    <property type="entry name" value="PEPCK_ATP"/>
    <property type="match status" value="1"/>
</dbReference>
<dbReference type="PIRSF" id="PIRSF006294">
    <property type="entry name" value="PEP_crbxkin"/>
    <property type="match status" value="1"/>
</dbReference>
<dbReference type="SUPFAM" id="SSF68923">
    <property type="entry name" value="PEP carboxykinase N-terminal domain"/>
    <property type="match status" value="1"/>
</dbReference>
<dbReference type="SUPFAM" id="SSF53795">
    <property type="entry name" value="PEP carboxykinase-like"/>
    <property type="match status" value="1"/>
</dbReference>
<dbReference type="PROSITE" id="PS00532">
    <property type="entry name" value="PEPCK_ATP"/>
    <property type="match status" value="1"/>
</dbReference>
<accession>Q12T12</accession>
<comment type="function">
    <text evidence="1">Involved in the gluconeogenesis. Catalyzes the conversion of oxaloacetate (OAA) to phosphoenolpyruvate (PEP) through direct phosphoryl transfer between the nucleoside triphosphate and OAA.</text>
</comment>
<comment type="catalytic activity">
    <reaction evidence="1">
        <text>oxaloacetate + ATP = phosphoenolpyruvate + ADP + CO2</text>
        <dbReference type="Rhea" id="RHEA:18617"/>
        <dbReference type="ChEBI" id="CHEBI:16452"/>
        <dbReference type="ChEBI" id="CHEBI:16526"/>
        <dbReference type="ChEBI" id="CHEBI:30616"/>
        <dbReference type="ChEBI" id="CHEBI:58702"/>
        <dbReference type="ChEBI" id="CHEBI:456216"/>
        <dbReference type="EC" id="4.1.1.49"/>
    </reaction>
</comment>
<comment type="cofactor">
    <cofactor evidence="1">
        <name>Mn(2+)</name>
        <dbReference type="ChEBI" id="CHEBI:29035"/>
    </cofactor>
    <text evidence="1">Binds 1 Mn(2+) ion per subunit.</text>
</comment>
<comment type="pathway">
    <text evidence="1">Carbohydrate biosynthesis; gluconeogenesis.</text>
</comment>
<comment type="subunit">
    <text evidence="1">Monomer.</text>
</comment>
<comment type="subcellular location">
    <subcellularLocation>
        <location evidence="1">Cytoplasm</location>
    </subcellularLocation>
</comment>
<comment type="similarity">
    <text evidence="1">Belongs to the phosphoenolpyruvate carboxykinase (ATP) family.</text>
</comment>
<reference key="1">
    <citation type="submission" date="2006-03" db="EMBL/GenBank/DDBJ databases">
        <title>Complete sequence of Shewanella denitrificans OS217.</title>
        <authorList>
            <consortium name="US DOE Joint Genome Institute"/>
            <person name="Copeland A."/>
            <person name="Lucas S."/>
            <person name="Lapidus A."/>
            <person name="Barry K."/>
            <person name="Detter J.C."/>
            <person name="Glavina del Rio T."/>
            <person name="Hammon N."/>
            <person name="Israni S."/>
            <person name="Dalin E."/>
            <person name="Tice H."/>
            <person name="Pitluck S."/>
            <person name="Brettin T."/>
            <person name="Bruce D."/>
            <person name="Han C."/>
            <person name="Tapia R."/>
            <person name="Gilna P."/>
            <person name="Kiss H."/>
            <person name="Schmutz J."/>
            <person name="Larimer F."/>
            <person name="Land M."/>
            <person name="Hauser L."/>
            <person name="Kyrpides N."/>
            <person name="Lykidis A."/>
            <person name="Richardson P."/>
        </authorList>
    </citation>
    <scope>NUCLEOTIDE SEQUENCE [LARGE SCALE GENOMIC DNA]</scope>
    <source>
        <strain>OS217 / ATCC BAA-1090 / DSM 15013</strain>
    </source>
</reference>
<feature type="chain" id="PRO_1000026352" description="Phosphoenolpyruvate carboxykinase (ATP)">
    <location>
        <begin position="1"/>
        <end position="513"/>
    </location>
</feature>
<feature type="binding site" evidence="1">
    <location>
        <position position="45"/>
    </location>
    <ligand>
        <name>substrate</name>
    </ligand>
</feature>
<feature type="binding site" evidence="1">
    <location>
        <position position="179"/>
    </location>
    <ligand>
        <name>substrate</name>
    </ligand>
</feature>
<feature type="binding site" evidence="1">
    <location>
        <position position="185"/>
    </location>
    <ligand>
        <name>ATP</name>
        <dbReference type="ChEBI" id="CHEBI:30616"/>
    </ligand>
</feature>
<feature type="binding site" evidence="1">
    <location>
        <position position="185"/>
    </location>
    <ligand>
        <name>Mn(2+)</name>
        <dbReference type="ChEBI" id="CHEBI:29035"/>
    </ligand>
</feature>
<feature type="binding site" evidence="1">
    <location>
        <position position="185"/>
    </location>
    <ligand>
        <name>substrate</name>
    </ligand>
</feature>
<feature type="binding site" evidence="1">
    <location>
        <position position="204"/>
    </location>
    <ligand>
        <name>ATP</name>
        <dbReference type="ChEBI" id="CHEBI:30616"/>
    </ligand>
</feature>
<feature type="binding site" evidence="1">
    <location>
        <position position="204"/>
    </location>
    <ligand>
        <name>Mn(2+)</name>
        <dbReference type="ChEBI" id="CHEBI:29035"/>
    </ligand>
</feature>
<feature type="binding site" evidence="1">
    <location>
        <begin position="220"/>
        <end position="228"/>
    </location>
    <ligand>
        <name>ATP</name>
        <dbReference type="ChEBI" id="CHEBI:30616"/>
    </ligand>
</feature>
<feature type="binding site" evidence="1">
    <location>
        <position position="241"/>
    </location>
    <ligand>
        <name>Mn(2+)</name>
        <dbReference type="ChEBI" id="CHEBI:29035"/>
    </ligand>
</feature>
<feature type="binding site" evidence="1">
    <location>
        <position position="269"/>
    </location>
    <ligand>
        <name>ATP</name>
        <dbReference type="ChEBI" id="CHEBI:30616"/>
    </ligand>
</feature>
<feature type="binding site" evidence="1">
    <location>
        <position position="305"/>
    </location>
    <ligand>
        <name>ATP</name>
        <dbReference type="ChEBI" id="CHEBI:30616"/>
    </ligand>
</feature>
<feature type="binding site" evidence="1">
    <location>
        <position position="305"/>
    </location>
    <ligand>
        <name>substrate</name>
    </ligand>
</feature>
<feature type="binding site" evidence="1">
    <location>
        <position position="431"/>
    </location>
    <ligand>
        <name>ATP</name>
        <dbReference type="ChEBI" id="CHEBI:30616"/>
    </ligand>
</feature>